<reference key="1">
    <citation type="journal article" date="1996" name="J. Ferment. Bioeng.">
        <title>Cloning and characterization of extradiol aromatic ring-cleavage dioxygenases of Pseudomonas aeruginosa JI104.</title>
        <authorList>
            <person name="Kitayama A."/>
            <person name="Achioku T."/>
            <person name="Yanagawa T."/>
            <person name="Kanou K."/>
            <person name="Kikuchi M."/>
            <person name="Ueda H."/>
            <person name="Suzuki E."/>
            <person name="Nishimura H."/>
            <person name="Nagamune T."/>
            <person name="Kawakami Y."/>
        </authorList>
    </citation>
    <scope>NUCLEOTIDE SEQUENCE [GENOMIC DNA]</scope>
    <source>
        <strain>JI104</strain>
    </source>
</reference>
<sequence length="307" mass="35124">MNKGIMRPGHVQLRVLDMSKALEHYVELLGLIEMDRDDQGRVYLKAWTEVDKFSVVLRERDEPGMDFMGFKVVDEDALRQLERDLTAYGCAVEQLPAGELNSCGRRVRFQAPSGHHFELYADKEYTGKWGVNEVNPEAWPRDLKGMAAVRFDHCLLYGDELPATYDLFTKVLGFYLAEQVLDENGTRVAQFLSLSTKAHDVAFIHHPEKGRLHHVSFHLETWEDVLRAADLISMTDTSIDIGPTRHGLTHGKTIYFFDPSGNRSEVFCGGNYSYPDHKPVTWLAKDLGKAIFYHDRVLNERFMTVLT</sequence>
<proteinExistence type="inferred from homology"/>
<keyword id="KW-0058">Aromatic hydrocarbons catabolism</keyword>
<keyword id="KW-0223">Dioxygenase</keyword>
<keyword id="KW-0408">Iron</keyword>
<keyword id="KW-0479">Metal-binding</keyword>
<keyword id="KW-0560">Oxidoreductase</keyword>
<keyword id="KW-0677">Repeat</keyword>
<feature type="chain" id="PRO_0000085026" description="Metapyrocatechase">
    <location>
        <begin position="1"/>
        <end position="307"/>
    </location>
</feature>
<feature type="domain" description="VOC 1" evidence="2">
    <location>
        <begin position="7"/>
        <end position="122"/>
    </location>
</feature>
<feature type="domain" description="VOC 2" evidence="2">
    <location>
        <begin position="150"/>
        <end position="269"/>
    </location>
</feature>
<feature type="binding site" evidence="1">
    <location>
        <position position="153"/>
    </location>
    <ligand>
        <name>Fe cation</name>
        <dbReference type="ChEBI" id="CHEBI:24875"/>
    </ligand>
</feature>
<feature type="binding site" evidence="1">
    <location>
        <position position="214"/>
    </location>
    <ligand>
        <name>Fe cation</name>
        <dbReference type="ChEBI" id="CHEBI:24875"/>
    </ligand>
</feature>
<feature type="binding site" evidence="1">
    <location>
        <position position="265"/>
    </location>
    <ligand>
        <name>Fe cation</name>
        <dbReference type="ChEBI" id="CHEBI:24875"/>
    </ligand>
</feature>
<name>XYLE_PSEAI</name>
<comment type="catalytic activity">
    <reaction>
        <text>catechol + O2 = (2Z,4E)-2-hydroxy-6-oxohexa-2,4-dienoate + H(+)</text>
        <dbReference type="Rhea" id="RHEA:17337"/>
        <dbReference type="ChEBI" id="CHEBI:15378"/>
        <dbReference type="ChEBI" id="CHEBI:15379"/>
        <dbReference type="ChEBI" id="CHEBI:18135"/>
        <dbReference type="ChEBI" id="CHEBI:71198"/>
        <dbReference type="EC" id="1.13.11.2"/>
    </reaction>
</comment>
<comment type="cofactor">
    <cofactor>
        <name>Fe(2+)</name>
        <dbReference type="ChEBI" id="CHEBI:29033"/>
    </cofactor>
</comment>
<comment type="pathway">
    <text>Xenobiotic degradation; toluene degradation.</text>
</comment>
<comment type="subunit">
    <text>Homotetramer.</text>
</comment>
<comment type="similarity">
    <text evidence="3">Belongs to the extradiol ring-cleavage dioxygenase family.</text>
</comment>
<accession>P27887</accession>
<evidence type="ECO:0000250" key="1"/>
<evidence type="ECO:0000255" key="2">
    <source>
        <dbReference type="PROSITE-ProRule" id="PRU01163"/>
    </source>
</evidence>
<evidence type="ECO:0000305" key="3"/>
<protein>
    <recommendedName>
        <fullName>Metapyrocatechase</fullName>
        <shortName>MPC</shortName>
        <ecNumber>1.13.11.2</ecNumber>
    </recommendedName>
    <alternativeName>
        <fullName>CatO2ase</fullName>
    </alternativeName>
    <alternativeName>
        <fullName>Catechol 2,3-dioxygenase</fullName>
    </alternativeName>
</protein>
<organism>
    <name type="scientific">Pseudomonas aeruginosa</name>
    <dbReference type="NCBI Taxonomy" id="287"/>
    <lineage>
        <taxon>Bacteria</taxon>
        <taxon>Pseudomonadati</taxon>
        <taxon>Pseudomonadota</taxon>
        <taxon>Gammaproteobacteria</taxon>
        <taxon>Pseudomonadales</taxon>
        <taxon>Pseudomonadaceae</taxon>
        <taxon>Pseudomonas</taxon>
    </lineage>
</organism>
<gene>
    <name type="primary">bztE</name>
</gene>
<dbReference type="EC" id="1.13.11.2"/>
<dbReference type="EMBL" id="X60740">
    <property type="protein sequence ID" value="CAA43145.1"/>
    <property type="molecule type" value="Genomic_DNA"/>
</dbReference>
<dbReference type="PIR" id="S15522">
    <property type="entry name" value="JC2503"/>
</dbReference>
<dbReference type="SMR" id="P27887"/>
<dbReference type="UniPathway" id="UPA00273"/>
<dbReference type="GO" id="GO:0018577">
    <property type="term" value="F:catechol 2,3-dioxygenase activity"/>
    <property type="evidence" value="ECO:0007669"/>
    <property type="project" value="UniProtKB-EC"/>
</dbReference>
<dbReference type="GO" id="GO:0008198">
    <property type="term" value="F:ferrous iron binding"/>
    <property type="evidence" value="ECO:0007669"/>
    <property type="project" value="InterPro"/>
</dbReference>
<dbReference type="GO" id="GO:0042203">
    <property type="term" value="P:toluene catabolic process"/>
    <property type="evidence" value="ECO:0007669"/>
    <property type="project" value="UniProtKB-UniPathway"/>
</dbReference>
<dbReference type="CDD" id="cd07243">
    <property type="entry name" value="2_3_CTD_C"/>
    <property type="match status" value="1"/>
</dbReference>
<dbReference type="CDD" id="cd07265">
    <property type="entry name" value="2_3_CTD_N"/>
    <property type="match status" value="1"/>
</dbReference>
<dbReference type="Gene3D" id="3.10.180.10">
    <property type="entry name" value="2,3-Dihydroxybiphenyl 1,2-Dioxygenase, domain 1"/>
    <property type="match status" value="2"/>
</dbReference>
<dbReference type="InterPro" id="IPR017624">
    <property type="entry name" value="Catechol_2-3_dOase"/>
</dbReference>
<dbReference type="InterPro" id="IPR051332">
    <property type="entry name" value="Fosfomycin_Res_Enzymes"/>
</dbReference>
<dbReference type="InterPro" id="IPR029068">
    <property type="entry name" value="Glyas_Bleomycin-R_OHBP_Dase"/>
</dbReference>
<dbReference type="InterPro" id="IPR004360">
    <property type="entry name" value="Glyas_Fos-R_dOase_dom"/>
</dbReference>
<dbReference type="InterPro" id="IPR037523">
    <property type="entry name" value="VOC"/>
</dbReference>
<dbReference type="InterPro" id="IPR000486">
    <property type="entry name" value="Xdiol_ring_cleave_dOase_1/2"/>
</dbReference>
<dbReference type="InterPro" id="IPR054560">
    <property type="entry name" value="XylE-like_N"/>
</dbReference>
<dbReference type="NCBIfam" id="TIGR03211">
    <property type="entry name" value="catechol_2_3"/>
    <property type="match status" value="1"/>
</dbReference>
<dbReference type="PANTHER" id="PTHR36113:SF6">
    <property type="entry name" value="FOSFOMYCIN RESISTANCE PROTEIN FOSX"/>
    <property type="match status" value="1"/>
</dbReference>
<dbReference type="PANTHER" id="PTHR36113">
    <property type="entry name" value="LYASE, PUTATIVE-RELATED-RELATED"/>
    <property type="match status" value="1"/>
</dbReference>
<dbReference type="Pfam" id="PF22247">
    <property type="entry name" value="Diox-like_N"/>
    <property type="match status" value="1"/>
</dbReference>
<dbReference type="Pfam" id="PF00903">
    <property type="entry name" value="Glyoxalase"/>
    <property type="match status" value="1"/>
</dbReference>
<dbReference type="SUPFAM" id="SSF54593">
    <property type="entry name" value="Glyoxalase/Bleomycin resistance protein/Dihydroxybiphenyl dioxygenase"/>
    <property type="match status" value="1"/>
</dbReference>
<dbReference type="PROSITE" id="PS00082">
    <property type="entry name" value="EXTRADIOL_DIOXYGENAS"/>
    <property type="match status" value="1"/>
</dbReference>
<dbReference type="PROSITE" id="PS51819">
    <property type="entry name" value="VOC"/>
    <property type="match status" value="2"/>
</dbReference>